<keyword id="KW-1185">Reference proteome</keyword>
<keyword id="KW-0814">Transposable element</keyword>
<protein>
    <recommendedName>
        <fullName>Insertion element IS6110 uncharacterized 12.0 kDa protein</fullName>
    </recommendedName>
</protein>
<evidence type="ECO:0000305" key="1"/>
<comment type="similarity">
    <text evidence="1">Belongs to the transposase 8 family.</text>
</comment>
<accession>A5TY80</accession>
<accession>O08121</accession>
<accession>O08155</accession>
<accession>O08157</accession>
<accession>O08158</accession>
<accession>O08265</accession>
<accession>Q50686</accession>
<dbReference type="EMBL" id="AJ242907">
    <property type="protein sequence ID" value="CAB60068.1"/>
    <property type="molecule type" value="Genomic_DNA"/>
</dbReference>
<dbReference type="EMBL" id="AJ242907">
    <property type="protein sequence ID" value="CAB60075.1"/>
    <property type="molecule type" value="Genomic_DNA"/>
</dbReference>
<dbReference type="EMBL" id="AJ242908">
    <property type="protein sequence ID" value="CAB62398.1"/>
    <property type="molecule type" value="Genomic_DNA"/>
</dbReference>
<dbReference type="EMBL" id="CP000611">
    <property type="protein sequence ID" value="ABQ71730.1"/>
    <property type="molecule type" value="Genomic_DNA"/>
</dbReference>
<dbReference type="EMBL" id="CP000611">
    <property type="protein sequence ID" value="ABQ72534.1"/>
    <property type="molecule type" value="Genomic_DNA"/>
</dbReference>
<dbReference type="EMBL" id="CP000611">
    <property type="protein sequence ID" value="ABQ73122.1"/>
    <property type="molecule type" value="Genomic_DNA"/>
</dbReference>
<dbReference type="EMBL" id="CP000611">
    <property type="protein sequence ID" value="ABQ73517.1"/>
    <property type="molecule type" value="Genomic_DNA"/>
</dbReference>
<dbReference type="EMBL" id="CP000611">
    <property type="protein sequence ID" value="ABQ73523.1"/>
    <property type="molecule type" value="Genomic_DNA"/>
</dbReference>
<dbReference type="EMBL" id="CP000611">
    <property type="protein sequence ID" value="ABQ73530.1"/>
    <property type="molecule type" value="Genomic_DNA"/>
</dbReference>
<dbReference type="EMBL" id="CP000611">
    <property type="protein sequence ID" value="ABQ73881.1"/>
    <property type="molecule type" value="Genomic_DNA"/>
</dbReference>
<dbReference type="EMBL" id="CP000611">
    <property type="protein sequence ID" value="ABQ73945.1"/>
    <property type="molecule type" value="Genomic_DNA"/>
</dbReference>
<dbReference type="EMBL" id="CP000611">
    <property type="protein sequence ID" value="ABQ74061.1"/>
    <property type="molecule type" value="Genomic_DNA"/>
</dbReference>
<dbReference type="EMBL" id="CP000611">
    <property type="protein sequence ID" value="ABQ74147.1"/>
    <property type="molecule type" value="Genomic_DNA"/>
</dbReference>
<dbReference type="EMBL" id="CP000611">
    <property type="protein sequence ID" value="ABQ74276.1"/>
    <property type="molecule type" value="Genomic_DNA"/>
</dbReference>
<dbReference type="EMBL" id="CP000611">
    <property type="protein sequence ID" value="ABQ74450.1"/>
    <property type="molecule type" value="Genomic_DNA"/>
</dbReference>
<dbReference type="EMBL" id="CP000611">
    <property type="protein sequence ID" value="ABQ74618.1"/>
    <property type="molecule type" value="Genomic_DNA"/>
</dbReference>
<dbReference type="EMBL" id="CP000611">
    <property type="protein sequence ID" value="ABQ75001.1"/>
    <property type="molecule type" value="Genomic_DNA"/>
</dbReference>
<dbReference type="EMBL" id="CP000611">
    <property type="protein sequence ID" value="ABQ75150.1"/>
    <property type="molecule type" value="Genomic_DNA"/>
</dbReference>
<dbReference type="EMBL" id="CP000611">
    <property type="protein sequence ID" value="ABQ75205.1"/>
    <property type="molecule type" value="Genomic_DNA"/>
</dbReference>
<dbReference type="EMBL" id="CP000611">
    <property type="protein sequence ID" value="ABQ75299.1"/>
    <property type="molecule type" value="Genomic_DNA"/>
</dbReference>
<dbReference type="PIR" id="G70567">
    <property type="entry name" value="G70567"/>
</dbReference>
<dbReference type="SMR" id="A5TY80"/>
<dbReference type="KEGG" id="mra:MRA_0012"/>
<dbReference type="KEGG" id="mra:MRA_0805"/>
<dbReference type="KEGG" id="mra:MRA_1380"/>
<dbReference type="KEGG" id="mra:MRA_1768"/>
<dbReference type="KEGG" id="mra:MRA_1770"/>
<dbReference type="KEGG" id="mra:MRA_1777"/>
<dbReference type="KEGG" id="mra:MRA_2120"/>
<dbReference type="KEGG" id="mra:MRA_2183"/>
<dbReference type="KEGG" id="mra:MRA_2297"/>
<dbReference type="KEGG" id="mra:MRA_2378"/>
<dbReference type="KEGG" id="mra:MRA_2505"/>
<dbReference type="KEGG" id="mra:MRA_2677"/>
<dbReference type="KEGG" id="mra:MRA_2839"/>
<dbReference type="KEGG" id="mra:MRA_3218"/>
<dbReference type="KEGG" id="mra:MRA_3367"/>
<dbReference type="KEGG" id="mra:MRA_3421"/>
<dbReference type="KEGG" id="mra:MRA_3514"/>
<dbReference type="eggNOG" id="COG2963">
    <property type="taxonomic scope" value="Bacteria"/>
</dbReference>
<dbReference type="HOGENOM" id="CLU_027402_33_6_11"/>
<dbReference type="Proteomes" id="UP000001988">
    <property type="component" value="Chromosome"/>
</dbReference>
<dbReference type="GO" id="GO:0003677">
    <property type="term" value="F:DNA binding"/>
    <property type="evidence" value="ECO:0007669"/>
    <property type="project" value="InterPro"/>
</dbReference>
<dbReference type="GO" id="GO:0004803">
    <property type="term" value="F:transposase activity"/>
    <property type="evidence" value="ECO:0007669"/>
    <property type="project" value="InterPro"/>
</dbReference>
<dbReference type="GO" id="GO:0006313">
    <property type="term" value="P:DNA transposition"/>
    <property type="evidence" value="ECO:0007669"/>
    <property type="project" value="InterPro"/>
</dbReference>
<dbReference type="Gene3D" id="1.10.10.10">
    <property type="entry name" value="Winged helix-like DNA-binding domain superfamily/Winged helix DNA-binding domain"/>
    <property type="match status" value="1"/>
</dbReference>
<dbReference type="InterPro" id="IPR009057">
    <property type="entry name" value="Homeodomain-like_sf"/>
</dbReference>
<dbReference type="InterPro" id="IPR002514">
    <property type="entry name" value="Transposase_8"/>
</dbReference>
<dbReference type="InterPro" id="IPR036388">
    <property type="entry name" value="WH-like_DNA-bd_sf"/>
</dbReference>
<dbReference type="Pfam" id="PF01527">
    <property type="entry name" value="HTH_Tnp_1"/>
    <property type="match status" value="1"/>
</dbReference>
<dbReference type="SUPFAM" id="SSF46689">
    <property type="entry name" value="Homeodomain-like"/>
    <property type="match status" value="1"/>
</dbReference>
<proteinExistence type="inferred from homology"/>
<gene>
    <name type="ordered locus">MRA_0012</name>
</gene>
<gene>
    <name type="ordered locus">MRA_0805</name>
</gene>
<gene>
    <name type="ordered locus">MRA_1380</name>
</gene>
<gene>
    <name type="ordered locus">MRA_1768</name>
</gene>
<gene>
    <name type="ordered locus">MRA_1770</name>
</gene>
<gene>
    <name type="ordered locus">MRA_1777</name>
</gene>
<gene>
    <name type="ordered locus">MRA_2120</name>
</gene>
<gene>
    <name type="ordered locus">MRA_2183</name>
</gene>
<gene>
    <name type="ordered locus">MRA_2297</name>
</gene>
<gene>
    <name type="ordered locus">MRA_2378</name>
</gene>
<gene>
    <name type="ordered locus">MRA_2505</name>
</gene>
<gene>
    <name type="ordered locus">MRA_2677</name>
</gene>
<gene>
    <name type="ordered locus">MRA_2839</name>
</gene>
<gene>
    <name type="ordered locus">MRA_3218</name>
</gene>
<gene>
    <name type="ordered locus">MRA_3367</name>
</gene>
<gene>
    <name type="ordered locus">MRA_3421</name>
</gene>
<gene>
    <name type="ordered locus">MRA_3514</name>
</gene>
<reference key="1">
    <citation type="journal article" date="1999" name="Infect. Immun.">
        <title>Genomic analysis reveals variation between Mycobacterium tuberculosis H37Rv and the attenuated M. tuberculosis H37Ra.</title>
        <authorList>
            <person name="Brosch R."/>
            <person name="Philipp W."/>
            <person name="Stavropoulos E."/>
            <person name="Colston M.J."/>
            <person name="Cole S.T."/>
            <person name="Gordon S.V."/>
        </authorList>
    </citation>
    <scope>NUCLEOTIDE SEQUENCE [GENOMIC DNA]</scope>
</reference>
<reference key="2">
    <citation type="journal article" date="2008" name="PLoS ONE">
        <title>Genetic basis of virulence attenuation revealed by comparative genomic analysis of Mycobacterium tuberculosis strain H37Ra versus H37Rv.</title>
        <authorList>
            <person name="Zheng H."/>
            <person name="Lu L."/>
            <person name="Wang B."/>
            <person name="Pu S."/>
            <person name="Zhang X."/>
            <person name="Zhu G."/>
            <person name="Shi W."/>
            <person name="Zhang L."/>
            <person name="Wang H."/>
            <person name="Wang S."/>
            <person name="Zhao G."/>
            <person name="Zhang Y."/>
        </authorList>
    </citation>
    <scope>NUCLEOTIDE SEQUENCE [LARGE SCALE GENOMIC DNA]</scope>
    <source>
        <strain>ATCC 25177 / H37Ra</strain>
    </source>
</reference>
<organism>
    <name type="scientific">Mycobacterium tuberculosis (strain ATCC 25177 / H37Ra)</name>
    <dbReference type="NCBI Taxonomy" id="419947"/>
    <lineage>
        <taxon>Bacteria</taxon>
        <taxon>Bacillati</taxon>
        <taxon>Actinomycetota</taxon>
        <taxon>Actinomycetes</taxon>
        <taxon>Mycobacteriales</taxon>
        <taxon>Mycobacteriaceae</taxon>
        <taxon>Mycobacterium</taxon>
        <taxon>Mycobacterium tuberculosis complex</taxon>
    </lineage>
</organism>
<name>YIA4_MYCTA</name>
<feature type="chain" id="PRO_0000305177" description="Insertion element IS6110 uncharacterized 12.0 kDa protein">
    <location>
        <begin position="1"/>
        <end position="108"/>
    </location>
</feature>
<sequence length="108" mass="12005">MSGGSSRRYPPELRERAVRMVAEIRGQHDSEWAAISEVARLLGVGCAETVRKWVRQAQVDAGARPGTTTEESAELKRLRRDNAELRRANAILKTASAFFAAELDRPAR</sequence>